<gene>
    <name type="primary">Sfswap</name>
    <name type="synonym">Sfrs8</name>
    <name type="synonym">Srsf8</name>
    <name type="synonym">Swap</name>
</gene>
<accession>Q3USH5</accession>
<accession>Q8CCZ1</accession>
<name>SFSWA_MOUSE</name>
<evidence type="ECO:0000250" key="1"/>
<evidence type="ECO:0000250" key="2">
    <source>
        <dbReference type="UniProtKB" id="Q12872"/>
    </source>
</evidence>
<evidence type="ECO:0000255" key="3"/>
<evidence type="ECO:0000256" key="4">
    <source>
        <dbReference type="SAM" id="MobiDB-lite"/>
    </source>
</evidence>
<evidence type="ECO:0000305" key="5"/>
<evidence type="ECO:0007744" key="6">
    <source>
    </source>
</evidence>
<evidence type="ECO:0007744" key="7">
    <source>
    </source>
</evidence>
<evidence type="ECO:0007744" key="8">
    <source>
    </source>
</evidence>
<protein>
    <recommendedName>
        <fullName>Splicing factor, suppressor of white-apricot homolog</fullName>
    </recommendedName>
    <alternativeName>
        <fullName>Splicing factor, arginine/serine-rich 8</fullName>
    </alternativeName>
    <alternativeName>
        <fullName>Suppressor of white apricot protein homolog</fullName>
    </alternativeName>
</protein>
<proteinExistence type="evidence at protein level"/>
<comment type="function">
    <text evidence="1">Plays a role as an alternative splicing regulator. Regulates its own expression at the level of RNA processing. Also regulates the splicing of fibronectin and CD45 genes. May act, at least in part, by interaction with other R/S-containing splicing factors. Represses the splicing of MAPT/Tau exon 10 (By similarity).</text>
</comment>
<comment type="interaction">
    <interactant intactId="EBI-8387273">
        <id>Q3USH5</id>
    </interactant>
    <interactant intactId="EBI-744603">
        <id>Q15637</id>
        <label>SF1</label>
    </interactant>
    <organismsDiffer>true</organismsDiffer>
    <experiments>3</experiments>
</comment>
<comment type="subcellular location">
    <subcellularLocation>
        <location evidence="5">Nucleus</location>
    </subcellularLocation>
</comment>
<keyword id="KW-0007">Acetylation</keyword>
<keyword id="KW-0175">Coiled coil</keyword>
<keyword id="KW-0507">mRNA processing</keyword>
<keyword id="KW-0508">mRNA splicing</keyword>
<keyword id="KW-0539">Nucleus</keyword>
<keyword id="KW-0597">Phosphoprotein</keyword>
<keyword id="KW-1185">Reference proteome</keyword>
<keyword id="KW-0677">Repeat</keyword>
<keyword id="KW-0678">Repressor</keyword>
<keyword id="KW-0694">RNA-binding</keyword>
<keyword id="KW-0804">Transcription</keyword>
<keyword id="KW-0805">Transcription regulation</keyword>
<dbReference type="EMBL" id="AC114614">
    <property type="status" value="NOT_ANNOTATED_CDS"/>
    <property type="molecule type" value="Genomic_DNA"/>
</dbReference>
<dbReference type="EMBL" id="AC114657">
    <property type="status" value="NOT_ANNOTATED_CDS"/>
    <property type="molecule type" value="Genomic_DNA"/>
</dbReference>
<dbReference type="EMBL" id="AK031872">
    <property type="protein sequence ID" value="BAC27586.1"/>
    <property type="molecule type" value="mRNA"/>
</dbReference>
<dbReference type="EMBL" id="AK140369">
    <property type="protein sequence ID" value="BAE24357.1"/>
    <property type="molecule type" value="mRNA"/>
</dbReference>
<dbReference type="CCDS" id="CCDS19694.1"/>
<dbReference type="RefSeq" id="NP_758480.2">
    <property type="nucleotide sequence ID" value="NM_172276.3"/>
</dbReference>
<dbReference type="SMR" id="Q3USH5"/>
<dbReference type="BioGRID" id="231165">
    <property type="interactions" value="2"/>
</dbReference>
<dbReference type="FunCoup" id="Q3USH5">
    <property type="interactions" value="3863"/>
</dbReference>
<dbReference type="IntAct" id="Q3USH5">
    <property type="interactions" value="3"/>
</dbReference>
<dbReference type="MINT" id="Q3USH5"/>
<dbReference type="STRING" id="10090.ENSMUSP00000062413"/>
<dbReference type="GlyGen" id="Q3USH5">
    <property type="glycosylation" value="4 sites, 1 O-linked glycan (1 site)"/>
</dbReference>
<dbReference type="iPTMnet" id="Q3USH5"/>
<dbReference type="PhosphoSitePlus" id="Q3USH5"/>
<dbReference type="jPOST" id="Q3USH5"/>
<dbReference type="PaxDb" id="10090-ENSMUSP00000062413"/>
<dbReference type="PeptideAtlas" id="Q3USH5"/>
<dbReference type="ProteomicsDB" id="256631"/>
<dbReference type="Pumba" id="Q3USH5"/>
<dbReference type="Antibodypedia" id="19429">
    <property type="antibodies" value="182 antibodies from 27 providers"/>
</dbReference>
<dbReference type="DNASU" id="231769"/>
<dbReference type="Ensembl" id="ENSMUST00000053737.9">
    <property type="protein sequence ID" value="ENSMUSP00000062413.8"/>
    <property type="gene ID" value="ENSMUSG00000029439.15"/>
</dbReference>
<dbReference type="GeneID" id="231769"/>
<dbReference type="KEGG" id="mmu:231769"/>
<dbReference type="UCSC" id="uc008zsu.1">
    <property type="organism name" value="mouse"/>
</dbReference>
<dbReference type="AGR" id="MGI:101760"/>
<dbReference type="CTD" id="6433"/>
<dbReference type="MGI" id="MGI:101760">
    <property type="gene designation" value="Sfswap"/>
</dbReference>
<dbReference type="VEuPathDB" id="HostDB:ENSMUSG00000029439"/>
<dbReference type="eggNOG" id="KOG1847">
    <property type="taxonomic scope" value="Eukaryota"/>
</dbReference>
<dbReference type="GeneTree" id="ENSGT00940000153892"/>
<dbReference type="HOGENOM" id="CLU_015459_0_0_1"/>
<dbReference type="InParanoid" id="Q3USH5"/>
<dbReference type="OMA" id="SDGAYHE"/>
<dbReference type="OrthoDB" id="5836667at2759"/>
<dbReference type="TreeFam" id="TF106264"/>
<dbReference type="BioGRID-ORCS" id="231769">
    <property type="hits" value="19 hits in 78 CRISPR screens"/>
</dbReference>
<dbReference type="ChiTaRS" id="Sfswap">
    <property type="organism name" value="mouse"/>
</dbReference>
<dbReference type="PRO" id="PR:Q3USH5"/>
<dbReference type="Proteomes" id="UP000000589">
    <property type="component" value="Chromosome 5"/>
</dbReference>
<dbReference type="RNAct" id="Q3USH5">
    <property type="molecule type" value="protein"/>
</dbReference>
<dbReference type="Bgee" id="ENSMUSG00000029439">
    <property type="expression patterns" value="Expressed in embryonic post-anal tail and 249 other cell types or tissues"/>
</dbReference>
<dbReference type="ExpressionAtlas" id="Q3USH5">
    <property type="expression patterns" value="baseline and differential"/>
</dbReference>
<dbReference type="GO" id="GO:0005634">
    <property type="term" value="C:nucleus"/>
    <property type="evidence" value="ECO:0007669"/>
    <property type="project" value="UniProtKB-SubCell"/>
</dbReference>
<dbReference type="GO" id="GO:0003723">
    <property type="term" value="F:RNA binding"/>
    <property type="evidence" value="ECO:0007669"/>
    <property type="project" value="UniProtKB-KW"/>
</dbReference>
<dbReference type="GO" id="GO:0000380">
    <property type="term" value="P:alternative mRNA splicing, via spliceosome"/>
    <property type="evidence" value="ECO:0000314"/>
    <property type="project" value="MGI"/>
</dbReference>
<dbReference type="GO" id="GO:0000395">
    <property type="term" value="P:mRNA 5'-splice site recognition"/>
    <property type="evidence" value="ECO:0000314"/>
    <property type="project" value="MGI"/>
</dbReference>
<dbReference type="GO" id="GO:0048025">
    <property type="term" value="P:negative regulation of mRNA splicing, via spliceosome"/>
    <property type="evidence" value="ECO:0000250"/>
    <property type="project" value="UniProtKB"/>
</dbReference>
<dbReference type="FunFam" id="1.10.10.790:FF:000014">
    <property type="entry name" value="Splicing factor SWAP"/>
    <property type="match status" value="1"/>
</dbReference>
<dbReference type="FunFam" id="1.10.10.790:FF:000003">
    <property type="entry name" value="Splicing factor, suppressor of white-apricot homolog"/>
    <property type="match status" value="1"/>
</dbReference>
<dbReference type="Gene3D" id="1.10.10.790">
    <property type="entry name" value="Surp module"/>
    <property type="match status" value="2"/>
</dbReference>
<dbReference type="InterPro" id="IPR000061">
    <property type="entry name" value="Surp"/>
</dbReference>
<dbReference type="InterPro" id="IPR040397">
    <property type="entry name" value="SWAP"/>
</dbReference>
<dbReference type="InterPro" id="IPR035967">
    <property type="entry name" value="SWAP/Surp_sf"/>
</dbReference>
<dbReference type="InterPro" id="IPR019147">
    <property type="entry name" value="SWAP_N_domain"/>
</dbReference>
<dbReference type="PANTHER" id="PTHR13161">
    <property type="entry name" value="SPLICING FACTOR SUPPRESSOR OF WHITE APRICOT"/>
    <property type="match status" value="1"/>
</dbReference>
<dbReference type="PANTHER" id="PTHR13161:SF15">
    <property type="entry name" value="SPLICING FACTOR, SUPPRESSOR OF WHITE-APRICOT HOMOLOG"/>
    <property type="match status" value="1"/>
</dbReference>
<dbReference type="Pfam" id="PF09750">
    <property type="entry name" value="DRY_EERY"/>
    <property type="match status" value="1"/>
</dbReference>
<dbReference type="Pfam" id="PF01805">
    <property type="entry name" value="Surp"/>
    <property type="match status" value="2"/>
</dbReference>
<dbReference type="SMART" id="SM01141">
    <property type="entry name" value="DRY_EERY"/>
    <property type="match status" value="1"/>
</dbReference>
<dbReference type="SMART" id="SM00648">
    <property type="entry name" value="SWAP"/>
    <property type="match status" value="2"/>
</dbReference>
<dbReference type="SUPFAM" id="SSF109905">
    <property type="entry name" value="Surp module (SWAP domain)"/>
    <property type="match status" value="2"/>
</dbReference>
<dbReference type="PROSITE" id="PS50128">
    <property type="entry name" value="SURP"/>
    <property type="match status" value="2"/>
</dbReference>
<reference key="1">
    <citation type="journal article" date="2009" name="PLoS Biol.">
        <title>Lineage-specific biology revealed by a finished genome assembly of the mouse.</title>
        <authorList>
            <person name="Church D.M."/>
            <person name="Goodstadt L."/>
            <person name="Hillier L.W."/>
            <person name="Zody M.C."/>
            <person name="Goldstein S."/>
            <person name="She X."/>
            <person name="Bult C.J."/>
            <person name="Agarwala R."/>
            <person name="Cherry J.L."/>
            <person name="DiCuccio M."/>
            <person name="Hlavina W."/>
            <person name="Kapustin Y."/>
            <person name="Meric P."/>
            <person name="Maglott D."/>
            <person name="Birtle Z."/>
            <person name="Marques A.C."/>
            <person name="Graves T."/>
            <person name="Zhou S."/>
            <person name="Teague B."/>
            <person name="Potamousis K."/>
            <person name="Churas C."/>
            <person name="Place M."/>
            <person name="Herschleb J."/>
            <person name="Runnheim R."/>
            <person name="Forrest D."/>
            <person name="Amos-Landgraf J."/>
            <person name="Schwartz D.C."/>
            <person name="Cheng Z."/>
            <person name="Lindblad-Toh K."/>
            <person name="Eichler E.E."/>
            <person name="Ponting C.P."/>
        </authorList>
    </citation>
    <scope>NUCLEOTIDE SEQUENCE [LARGE SCALE GENOMIC DNA]</scope>
    <source>
        <strain>C57BL/6J</strain>
    </source>
</reference>
<reference key="2">
    <citation type="journal article" date="2005" name="Science">
        <title>The transcriptional landscape of the mammalian genome.</title>
        <authorList>
            <person name="Carninci P."/>
            <person name="Kasukawa T."/>
            <person name="Katayama S."/>
            <person name="Gough J."/>
            <person name="Frith M.C."/>
            <person name="Maeda N."/>
            <person name="Oyama R."/>
            <person name="Ravasi T."/>
            <person name="Lenhard B."/>
            <person name="Wells C."/>
            <person name="Kodzius R."/>
            <person name="Shimokawa K."/>
            <person name="Bajic V.B."/>
            <person name="Brenner S.E."/>
            <person name="Batalov S."/>
            <person name="Forrest A.R."/>
            <person name="Zavolan M."/>
            <person name="Davis M.J."/>
            <person name="Wilming L.G."/>
            <person name="Aidinis V."/>
            <person name="Allen J.E."/>
            <person name="Ambesi-Impiombato A."/>
            <person name="Apweiler R."/>
            <person name="Aturaliya R.N."/>
            <person name="Bailey T.L."/>
            <person name="Bansal M."/>
            <person name="Baxter L."/>
            <person name="Beisel K.W."/>
            <person name="Bersano T."/>
            <person name="Bono H."/>
            <person name="Chalk A.M."/>
            <person name="Chiu K.P."/>
            <person name="Choudhary V."/>
            <person name="Christoffels A."/>
            <person name="Clutterbuck D.R."/>
            <person name="Crowe M.L."/>
            <person name="Dalla E."/>
            <person name="Dalrymple B.P."/>
            <person name="de Bono B."/>
            <person name="Della Gatta G."/>
            <person name="di Bernardo D."/>
            <person name="Down T."/>
            <person name="Engstrom P."/>
            <person name="Fagiolini M."/>
            <person name="Faulkner G."/>
            <person name="Fletcher C.F."/>
            <person name="Fukushima T."/>
            <person name="Furuno M."/>
            <person name="Futaki S."/>
            <person name="Gariboldi M."/>
            <person name="Georgii-Hemming P."/>
            <person name="Gingeras T.R."/>
            <person name="Gojobori T."/>
            <person name="Green R.E."/>
            <person name="Gustincich S."/>
            <person name="Harbers M."/>
            <person name="Hayashi Y."/>
            <person name="Hensch T.K."/>
            <person name="Hirokawa N."/>
            <person name="Hill D."/>
            <person name="Huminiecki L."/>
            <person name="Iacono M."/>
            <person name="Ikeo K."/>
            <person name="Iwama A."/>
            <person name="Ishikawa T."/>
            <person name="Jakt M."/>
            <person name="Kanapin A."/>
            <person name="Katoh M."/>
            <person name="Kawasawa Y."/>
            <person name="Kelso J."/>
            <person name="Kitamura H."/>
            <person name="Kitano H."/>
            <person name="Kollias G."/>
            <person name="Krishnan S.P."/>
            <person name="Kruger A."/>
            <person name="Kummerfeld S.K."/>
            <person name="Kurochkin I.V."/>
            <person name="Lareau L.F."/>
            <person name="Lazarevic D."/>
            <person name="Lipovich L."/>
            <person name="Liu J."/>
            <person name="Liuni S."/>
            <person name="McWilliam S."/>
            <person name="Madan Babu M."/>
            <person name="Madera M."/>
            <person name="Marchionni L."/>
            <person name="Matsuda H."/>
            <person name="Matsuzawa S."/>
            <person name="Miki H."/>
            <person name="Mignone F."/>
            <person name="Miyake S."/>
            <person name="Morris K."/>
            <person name="Mottagui-Tabar S."/>
            <person name="Mulder N."/>
            <person name="Nakano N."/>
            <person name="Nakauchi H."/>
            <person name="Ng P."/>
            <person name="Nilsson R."/>
            <person name="Nishiguchi S."/>
            <person name="Nishikawa S."/>
            <person name="Nori F."/>
            <person name="Ohara O."/>
            <person name="Okazaki Y."/>
            <person name="Orlando V."/>
            <person name="Pang K.C."/>
            <person name="Pavan W.J."/>
            <person name="Pavesi G."/>
            <person name="Pesole G."/>
            <person name="Petrovsky N."/>
            <person name="Piazza S."/>
            <person name="Reed J."/>
            <person name="Reid J.F."/>
            <person name="Ring B.Z."/>
            <person name="Ringwald M."/>
            <person name="Rost B."/>
            <person name="Ruan Y."/>
            <person name="Salzberg S.L."/>
            <person name="Sandelin A."/>
            <person name="Schneider C."/>
            <person name="Schoenbach C."/>
            <person name="Sekiguchi K."/>
            <person name="Semple C.A."/>
            <person name="Seno S."/>
            <person name="Sessa L."/>
            <person name="Sheng Y."/>
            <person name="Shibata Y."/>
            <person name="Shimada H."/>
            <person name="Shimada K."/>
            <person name="Silva D."/>
            <person name="Sinclair B."/>
            <person name="Sperling S."/>
            <person name="Stupka E."/>
            <person name="Sugiura K."/>
            <person name="Sultana R."/>
            <person name="Takenaka Y."/>
            <person name="Taki K."/>
            <person name="Tammoja K."/>
            <person name="Tan S.L."/>
            <person name="Tang S."/>
            <person name="Taylor M.S."/>
            <person name="Tegner J."/>
            <person name="Teichmann S.A."/>
            <person name="Ueda H.R."/>
            <person name="van Nimwegen E."/>
            <person name="Verardo R."/>
            <person name="Wei C.L."/>
            <person name="Yagi K."/>
            <person name="Yamanishi H."/>
            <person name="Zabarovsky E."/>
            <person name="Zhu S."/>
            <person name="Zimmer A."/>
            <person name="Hide W."/>
            <person name="Bult C."/>
            <person name="Grimmond S.M."/>
            <person name="Teasdale R.D."/>
            <person name="Liu E.T."/>
            <person name="Brusic V."/>
            <person name="Quackenbush J."/>
            <person name="Wahlestedt C."/>
            <person name="Mattick J.S."/>
            <person name="Hume D.A."/>
            <person name="Kai C."/>
            <person name="Sasaki D."/>
            <person name="Tomaru Y."/>
            <person name="Fukuda S."/>
            <person name="Kanamori-Katayama M."/>
            <person name="Suzuki M."/>
            <person name="Aoki J."/>
            <person name="Arakawa T."/>
            <person name="Iida J."/>
            <person name="Imamura K."/>
            <person name="Itoh M."/>
            <person name="Kato T."/>
            <person name="Kawaji H."/>
            <person name="Kawagashira N."/>
            <person name="Kawashima T."/>
            <person name="Kojima M."/>
            <person name="Kondo S."/>
            <person name="Konno H."/>
            <person name="Nakano K."/>
            <person name="Ninomiya N."/>
            <person name="Nishio T."/>
            <person name="Okada M."/>
            <person name="Plessy C."/>
            <person name="Shibata K."/>
            <person name="Shiraki T."/>
            <person name="Suzuki S."/>
            <person name="Tagami M."/>
            <person name="Waki K."/>
            <person name="Watahiki A."/>
            <person name="Okamura-Oho Y."/>
            <person name="Suzuki H."/>
            <person name="Kawai J."/>
            <person name="Hayashizaki Y."/>
        </authorList>
    </citation>
    <scope>NUCLEOTIDE SEQUENCE [LARGE SCALE MRNA] OF 1-845</scope>
    <source>
        <strain>C57BL/6J</strain>
        <tissue>Adipose tissue</tissue>
        <tissue>Medulla oblongata</tissue>
    </source>
</reference>
<reference key="3">
    <citation type="journal article" date="2007" name="Proc. Natl. Acad. Sci. U.S.A.">
        <title>Large-scale phosphorylation analysis of mouse liver.</title>
        <authorList>
            <person name="Villen J."/>
            <person name="Beausoleil S.A."/>
            <person name="Gerber S.A."/>
            <person name="Gygi S.P."/>
        </authorList>
    </citation>
    <scope>PHOSPHORYLATION [LARGE SCALE ANALYSIS] AT SER-903</scope>
    <scope>IDENTIFICATION BY MASS SPECTROMETRY [LARGE SCALE ANALYSIS]</scope>
    <source>
        <tissue>Liver</tissue>
    </source>
</reference>
<reference key="4">
    <citation type="journal article" date="2007" name="Science">
        <title>ATM and ATR substrate analysis reveals extensive protein networks responsive to DNA damage.</title>
        <authorList>
            <person name="Matsuoka S."/>
            <person name="Ballif B.A."/>
            <person name="Smogorzewska A."/>
            <person name="McDonald E.R. III"/>
            <person name="Hurov K.E."/>
            <person name="Luo J."/>
            <person name="Bakalarski C.E."/>
            <person name="Zhao Z."/>
            <person name="Solimini N."/>
            <person name="Lerenthal Y."/>
            <person name="Shiloh Y."/>
            <person name="Gygi S.P."/>
            <person name="Elledge S.J."/>
        </authorList>
    </citation>
    <scope>PHOSPHORYLATION [LARGE SCALE ANALYSIS] AT THR-639</scope>
    <scope>IDENTIFICATION BY MASS SPECTROMETRY [LARGE SCALE ANALYSIS]</scope>
    <source>
        <tissue>Embryonic fibroblast</tissue>
    </source>
</reference>
<reference key="5">
    <citation type="journal article" date="2010" name="Cell">
        <title>A tissue-specific atlas of mouse protein phosphorylation and expression.</title>
        <authorList>
            <person name="Huttlin E.L."/>
            <person name="Jedrychowski M.P."/>
            <person name="Elias J.E."/>
            <person name="Goswami T."/>
            <person name="Rad R."/>
            <person name="Beausoleil S.A."/>
            <person name="Villen J."/>
            <person name="Haas W."/>
            <person name="Sowa M.E."/>
            <person name="Gygi S.P."/>
        </authorList>
    </citation>
    <scope>PHOSPHORYLATION [LARGE SCALE ANALYSIS] AT SER-283; SER-601; SER-621; SER-899 AND SER-903</scope>
    <scope>IDENTIFICATION BY MASS SPECTROMETRY [LARGE SCALE ANALYSIS]</scope>
    <source>
        <tissue>Brain</tissue>
        <tissue>Brown adipose tissue</tissue>
        <tissue>Heart</tissue>
        <tissue>Kidney</tissue>
        <tissue>Lung</tissue>
        <tissue>Pancreas</tissue>
        <tissue>Spleen</tissue>
        <tissue>Testis</tissue>
    </source>
</reference>
<organism>
    <name type="scientific">Mus musculus</name>
    <name type="common">Mouse</name>
    <dbReference type="NCBI Taxonomy" id="10090"/>
    <lineage>
        <taxon>Eukaryota</taxon>
        <taxon>Metazoa</taxon>
        <taxon>Chordata</taxon>
        <taxon>Craniata</taxon>
        <taxon>Vertebrata</taxon>
        <taxon>Euteleostomi</taxon>
        <taxon>Mammalia</taxon>
        <taxon>Eutheria</taxon>
        <taxon>Euarchontoglires</taxon>
        <taxon>Glires</taxon>
        <taxon>Rodentia</taxon>
        <taxon>Myomorpha</taxon>
        <taxon>Muroidea</taxon>
        <taxon>Muridae</taxon>
        <taxon>Murinae</taxon>
        <taxon>Mus</taxon>
        <taxon>Mus</taxon>
    </lineage>
</organism>
<feature type="chain" id="PRO_0000413023" description="Splicing factor, suppressor of white-apricot homolog">
    <location>
        <begin position="1"/>
        <end position="945"/>
    </location>
</feature>
<feature type="repeat" description="SURP motif 1">
    <location>
        <begin position="211"/>
        <end position="253"/>
    </location>
</feature>
<feature type="repeat" description="SURP motif 2">
    <location>
        <begin position="458"/>
        <end position="498"/>
    </location>
</feature>
<feature type="region of interest" description="Disordered" evidence="4">
    <location>
        <begin position="1"/>
        <end position="28"/>
    </location>
</feature>
<feature type="region of interest" description="Disordered" evidence="4">
    <location>
        <begin position="156"/>
        <end position="185"/>
    </location>
</feature>
<feature type="region of interest" description="Disordered" evidence="4">
    <location>
        <begin position="271"/>
        <end position="301"/>
    </location>
</feature>
<feature type="region of interest" description="Disordered" evidence="4">
    <location>
        <begin position="332"/>
        <end position="355"/>
    </location>
</feature>
<feature type="region of interest" description="Disordered" evidence="4">
    <location>
        <begin position="403"/>
        <end position="448"/>
    </location>
</feature>
<feature type="region of interest" description="Disordered" evidence="4">
    <location>
        <begin position="512"/>
        <end position="564"/>
    </location>
</feature>
<feature type="region of interest" description="Disordered" evidence="4">
    <location>
        <begin position="589"/>
        <end position="680"/>
    </location>
</feature>
<feature type="region of interest" description="Disordered" evidence="4">
    <location>
        <begin position="712"/>
        <end position="921"/>
    </location>
</feature>
<feature type="coiled-coil region" evidence="3">
    <location>
        <begin position="632"/>
        <end position="686"/>
    </location>
</feature>
<feature type="compositionally biased region" description="Basic and acidic residues" evidence="4">
    <location>
        <begin position="9"/>
        <end position="21"/>
    </location>
</feature>
<feature type="compositionally biased region" description="Basic and acidic residues" evidence="4">
    <location>
        <begin position="169"/>
        <end position="178"/>
    </location>
</feature>
<feature type="compositionally biased region" description="Acidic residues" evidence="4">
    <location>
        <begin position="284"/>
        <end position="294"/>
    </location>
</feature>
<feature type="compositionally biased region" description="Low complexity" evidence="4">
    <location>
        <begin position="335"/>
        <end position="352"/>
    </location>
</feature>
<feature type="compositionally biased region" description="Pro residues" evidence="4">
    <location>
        <begin position="412"/>
        <end position="426"/>
    </location>
</feature>
<feature type="compositionally biased region" description="Low complexity" evidence="4">
    <location>
        <begin position="427"/>
        <end position="447"/>
    </location>
</feature>
<feature type="compositionally biased region" description="Low complexity" evidence="4">
    <location>
        <begin position="514"/>
        <end position="527"/>
    </location>
</feature>
<feature type="compositionally biased region" description="Acidic residues" evidence="4">
    <location>
        <begin position="528"/>
        <end position="540"/>
    </location>
</feature>
<feature type="compositionally biased region" description="Basic and acidic residues" evidence="4">
    <location>
        <begin position="589"/>
        <end position="598"/>
    </location>
</feature>
<feature type="compositionally biased region" description="Low complexity" evidence="4">
    <location>
        <begin position="615"/>
        <end position="630"/>
    </location>
</feature>
<feature type="compositionally biased region" description="Basic and acidic residues" evidence="4">
    <location>
        <begin position="643"/>
        <end position="679"/>
    </location>
</feature>
<feature type="compositionally biased region" description="Basic and acidic residues" evidence="4">
    <location>
        <begin position="733"/>
        <end position="752"/>
    </location>
</feature>
<feature type="compositionally biased region" description="Basic residues" evidence="4">
    <location>
        <begin position="753"/>
        <end position="787"/>
    </location>
</feature>
<feature type="compositionally biased region" description="Basic residues" evidence="4">
    <location>
        <begin position="795"/>
        <end position="810"/>
    </location>
</feature>
<feature type="compositionally biased region" description="Basic and acidic residues" evidence="4">
    <location>
        <begin position="811"/>
        <end position="821"/>
    </location>
</feature>
<feature type="compositionally biased region" description="Basic residues" evidence="4">
    <location>
        <begin position="835"/>
        <end position="861"/>
    </location>
</feature>
<feature type="compositionally biased region" description="Low complexity" evidence="4">
    <location>
        <begin position="871"/>
        <end position="894"/>
    </location>
</feature>
<feature type="compositionally biased region" description="Basic and acidic residues" evidence="4">
    <location>
        <begin position="895"/>
        <end position="908"/>
    </location>
</feature>
<feature type="compositionally biased region" description="Low complexity" evidence="4">
    <location>
        <begin position="909"/>
        <end position="920"/>
    </location>
</feature>
<feature type="modified residue" description="Phosphoserine" evidence="8">
    <location>
        <position position="283"/>
    </location>
</feature>
<feature type="modified residue" description="N6-acetyllysine" evidence="2">
    <location>
        <position position="315"/>
    </location>
</feature>
<feature type="modified residue" description="Phosphoserine" evidence="8">
    <location>
        <position position="601"/>
    </location>
</feature>
<feature type="modified residue" description="Phosphoserine" evidence="8">
    <location>
        <position position="621"/>
    </location>
</feature>
<feature type="modified residue" description="Phosphothreonine" evidence="7">
    <location>
        <position position="639"/>
    </location>
</feature>
<feature type="modified residue" description="Phosphoserine" evidence="2">
    <location>
        <position position="829"/>
    </location>
</feature>
<feature type="modified residue" description="Phosphoserine" evidence="2">
    <location>
        <position position="831"/>
    </location>
</feature>
<feature type="modified residue" description="Phosphoserine" evidence="8">
    <location>
        <position position="899"/>
    </location>
</feature>
<feature type="modified residue" description="Phosphoserine" evidence="6 8">
    <location>
        <position position="903"/>
    </location>
</feature>
<sequence>MYGAGGGRAKPERKGGVKEEAGPGGTGTGGNRVELLVFGYACKLFRDDERALAQEQGQHLIPWMGDPKILIDRYDGRGHLHDLSAYDAEYATWNRDYQLSEEEARVEALCDEERYLALHTDLLEEEARQEEEYKRLSEALAEDGNYSAVGFTYGSDYYDPSEPTEEEEPSKQREKNEAENLEENEEPFIAPLGLSVPSDVELPPTAKMHAIIERTANFVCKQGAQFEIMLKAKQARNSQFDFLRFDHYLNPYYKFIQKAMKEGRYTVLAESKNEEKKKSGPTSDNEEEDDEEDGSYLHPSLFASKKSSRLEELMKPLKVVDPDHPLAALVRKAQADSSAPAPPTADGTPAQPSQVEYTADSTVAAMYYSYYMLPDGTYCLAPPPPGIDVATYYSTLPAGVTVSSSPGVTTTVPPPPGTTPPPPPTTAEPSSGVTSTTTTTSALAPVAIIPPPPDIQPVIDKLAEYVARNGLKFETSVRAKNDQRFEFLQPWHQYNAYYEFKKQFFLQKEGGGSTQAASTAEEAPTETAVEESGEAGEDGAPEGMAETGGRGSGKKEAGSSKSTVDGKLVKASFAPISFAIKAKENDLLPLEKNRVKLDDDSEEDEESRECQESTSSVANPSPAAAPPSVAVEEKKPQLTQEELEAKQAKQKLEDRLAAAAREKLAQASKESKEKQLQAERKRKAALFLQTLKNPLPEAEVGKLEESTFGVEDTGVMPCPLLVGGRTLPILEGKPPERPSNRCRDPPREEEREKKKKKHKKRSRTRSRSPKYHSSSKPRSRSHSKAKHSLPSAYRTVRRSRSRSRSPRRRAHSPERRREERSVPTAYRMSGSPGVSRKRTRSRSPHEKKKKRRSRSRTKAKARSQSTSPSKQAAQRPSAHSAHSASISPVESRGSSQERSRGVSQEKDGQISSAIVSSVQSKITQDLMAKVRAMLAASKNLQTSAS</sequence>